<keyword id="KW-0472">Membrane</keyword>
<keyword id="KW-0496">Mitochondrion</keyword>
<keyword id="KW-0809">Transit peptide</keyword>
<keyword id="KW-0812">Transmembrane</keyword>
<keyword id="KW-1133">Transmembrane helix</keyword>
<protein>
    <recommendedName>
        <fullName>Altered inheritance of mitochondria protein 34, mitochondrial</fullName>
    </recommendedName>
</protein>
<organism>
    <name type="scientific">Saccharomyces cerevisiae (strain AWRI1631)</name>
    <name type="common">Baker's yeast</name>
    <dbReference type="NCBI Taxonomy" id="545124"/>
    <lineage>
        <taxon>Eukaryota</taxon>
        <taxon>Fungi</taxon>
        <taxon>Dikarya</taxon>
        <taxon>Ascomycota</taxon>
        <taxon>Saccharomycotina</taxon>
        <taxon>Saccharomycetes</taxon>
        <taxon>Saccharomycetales</taxon>
        <taxon>Saccharomycetaceae</taxon>
        <taxon>Saccharomyces</taxon>
    </lineage>
</organism>
<dbReference type="EMBL" id="ABSV01001791">
    <property type="protein sequence ID" value="EDZ70215.1"/>
    <property type="molecule type" value="Genomic_DNA"/>
</dbReference>
<dbReference type="SMR" id="B5VPC6"/>
<dbReference type="Proteomes" id="UP000008988">
    <property type="component" value="Unassembled WGS sequence"/>
</dbReference>
<dbReference type="GO" id="GO:0031966">
    <property type="term" value="C:mitochondrial membrane"/>
    <property type="evidence" value="ECO:0007669"/>
    <property type="project" value="UniProtKB-SubCell"/>
</dbReference>
<dbReference type="FunFam" id="1.10.720.30:FF:000034">
    <property type="entry name" value="Altered inheritance of mitochondria protein 34, mitochondrial"/>
    <property type="match status" value="1"/>
</dbReference>
<dbReference type="Gene3D" id="1.10.720.30">
    <property type="entry name" value="SAP domain"/>
    <property type="match status" value="1"/>
</dbReference>
<dbReference type="InterPro" id="IPR003034">
    <property type="entry name" value="SAP_dom"/>
</dbReference>
<dbReference type="InterPro" id="IPR036361">
    <property type="entry name" value="SAP_dom_sf"/>
</dbReference>
<dbReference type="Pfam" id="PF02037">
    <property type="entry name" value="SAP"/>
    <property type="match status" value="1"/>
</dbReference>
<dbReference type="SMART" id="SM00513">
    <property type="entry name" value="SAP"/>
    <property type="match status" value="1"/>
</dbReference>
<dbReference type="SUPFAM" id="SSF68906">
    <property type="entry name" value="SAP domain"/>
    <property type="match status" value="1"/>
</dbReference>
<dbReference type="PROSITE" id="PS50800">
    <property type="entry name" value="SAP"/>
    <property type="match status" value="1"/>
</dbReference>
<feature type="transit peptide" description="Mitochondrion" evidence="2">
    <location>
        <begin position="1"/>
        <end position="55"/>
    </location>
</feature>
<feature type="chain" id="PRO_0000399714" description="Altered inheritance of mitochondria protein 34, mitochondrial">
    <location>
        <begin position="56"/>
        <end position="198"/>
    </location>
</feature>
<feature type="transmembrane region" description="Helical" evidence="2">
    <location>
        <begin position="172"/>
        <end position="187"/>
    </location>
</feature>
<feature type="domain" description="SAP" evidence="3">
    <location>
        <begin position="69"/>
        <end position="103"/>
    </location>
</feature>
<reference key="1">
    <citation type="journal article" date="2008" name="FEMS Yeast Res.">
        <title>Comparative genome analysis of a Saccharomyces cerevisiae wine strain.</title>
        <authorList>
            <person name="Borneman A.R."/>
            <person name="Forgan A.H."/>
            <person name="Pretorius I.S."/>
            <person name="Chambers P.J."/>
        </authorList>
    </citation>
    <scope>NUCLEOTIDE SEQUENCE [LARGE SCALE GENOMIC DNA]</scope>
    <source>
        <strain>AWRI1631</strain>
    </source>
</reference>
<name>AIM34_YEAS6</name>
<gene>
    <name type="primary">AIM34</name>
    <name type="ORF">AWRI1631_131390</name>
</gene>
<proteinExistence type="inferred from homology"/>
<accession>B5VPC6</accession>
<sequence>MSISLLGRIVSQQFSGIRAAGPGRSLYLPFTLLLKQPGAYKVNLHRYVHSTQTKSHLSFLMNNNDITPFQKFTVKVLKEQCKSRGLKLSGRKSDLLQRLITHDSCSNKKSSVKINEPKKKRILINDPIKITKKLVSDKTFRTIEKNISSLQNTPVIETPCDVHSHLQPRDRIFLLGFFMLSCLWWNLEPQESKPTIDH</sequence>
<evidence type="ECO:0000250" key="1"/>
<evidence type="ECO:0000255" key="2"/>
<evidence type="ECO:0000255" key="3">
    <source>
        <dbReference type="PROSITE-ProRule" id="PRU00186"/>
    </source>
</evidence>
<evidence type="ECO:0000305" key="4"/>
<comment type="subcellular location">
    <subcellularLocation>
        <location evidence="1">Mitochondrion membrane</location>
        <topology evidence="1">Single-pass membrane protein</topology>
    </subcellularLocation>
</comment>
<comment type="similarity">
    <text evidence="4">Belongs to the AIM34 family.</text>
</comment>